<feature type="chain" id="PRO_0000269848" description="Ras-related protein Rab-42">
    <location>
        <begin position="1"/>
        <end position="218"/>
    </location>
</feature>
<feature type="binding site" evidence="1">
    <location>
        <position position="19"/>
    </location>
    <ligand>
        <name>GTP</name>
        <dbReference type="ChEBI" id="CHEBI:37565"/>
    </ligand>
</feature>
<feature type="binding site" evidence="1">
    <location>
        <position position="21"/>
    </location>
    <ligand>
        <name>GTP</name>
        <dbReference type="ChEBI" id="CHEBI:37565"/>
    </ligand>
</feature>
<feature type="binding site" evidence="1">
    <location>
        <position position="22"/>
    </location>
    <ligand>
        <name>GTP</name>
        <dbReference type="ChEBI" id="CHEBI:37565"/>
    </ligand>
</feature>
<feature type="binding site" evidence="1">
    <location>
        <position position="23"/>
    </location>
    <ligand>
        <name>GTP</name>
        <dbReference type="ChEBI" id="CHEBI:37565"/>
    </ligand>
</feature>
<feature type="binding site" evidence="1">
    <location>
        <position position="23"/>
    </location>
    <ligand>
        <name>Mg(2+)</name>
        <dbReference type="ChEBI" id="CHEBI:18420"/>
    </ligand>
</feature>
<feature type="binding site" evidence="1">
    <location>
        <position position="46"/>
    </location>
    <ligand>
        <name>GTP</name>
        <dbReference type="ChEBI" id="CHEBI:37565"/>
    </ligand>
</feature>
<feature type="binding site" evidence="1">
    <location>
        <position position="46"/>
    </location>
    <ligand>
        <name>Mg(2+)</name>
        <dbReference type="ChEBI" id="CHEBI:18420"/>
    </ligand>
</feature>
<feature type="binding site" evidence="1">
    <location>
        <position position="70"/>
    </location>
    <ligand>
        <name>Mg(2+)</name>
        <dbReference type="ChEBI" id="CHEBI:18420"/>
    </ligand>
</feature>
<feature type="binding site" evidence="1">
    <location>
        <position position="73"/>
    </location>
    <ligand>
        <name>GTP</name>
        <dbReference type="ChEBI" id="CHEBI:37565"/>
    </ligand>
</feature>
<feature type="binding site" evidence="1">
    <location>
        <position position="130"/>
    </location>
    <ligand>
        <name>GTP</name>
        <dbReference type="ChEBI" id="CHEBI:37565"/>
    </ligand>
</feature>
<feature type="binding site" evidence="1">
    <location>
        <position position="132"/>
    </location>
    <ligand>
        <name>GTP</name>
        <dbReference type="ChEBI" id="CHEBI:37565"/>
    </ligand>
</feature>
<feature type="binding site" evidence="1">
    <location>
        <position position="160"/>
    </location>
    <ligand>
        <name>GTP</name>
        <dbReference type="ChEBI" id="CHEBI:37565"/>
    </ligand>
</feature>
<feature type="binding site" evidence="1">
    <location>
        <position position="161"/>
    </location>
    <ligand>
        <name>GTP</name>
        <dbReference type="ChEBI" id="CHEBI:37565"/>
    </ligand>
</feature>
<feature type="lipid moiety-binding region" description="S-geranylgeranyl cysteine" evidence="1">
    <location>
        <position position="216"/>
    </location>
</feature>
<feature type="lipid moiety-binding region" description="S-geranylgeranyl cysteine" evidence="1">
    <location>
        <position position="218"/>
    </location>
</feature>
<feature type="splice variant" id="VSP_059258" description="In isoform 2.">
    <location>
        <begin position="1"/>
        <end position="113"/>
    </location>
</feature>
<keyword id="KW-0025">Alternative splicing</keyword>
<keyword id="KW-0342">GTP-binding</keyword>
<keyword id="KW-0378">Hydrolase</keyword>
<keyword id="KW-0449">Lipoprotein</keyword>
<keyword id="KW-0460">Magnesium</keyword>
<keyword id="KW-0472">Membrane</keyword>
<keyword id="KW-0479">Metal-binding</keyword>
<keyword id="KW-0547">Nucleotide-binding</keyword>
<keyword id="KW-0636">Prenylation</keyword>
<keyword id="KW-1267">Proteomics identification</keyword>
<keyword id="KW-1185">Reference proteome</keyword>
<name>RAB42_HUMAN</name>
<comment type="function">
    <text evidence="1 2">The small GTPases Rab are key regulators of intracellular membrane trafficking, from the formation of transport vesicles to their fusion with membranes. Rabs cycle between an inactive GDP-bound form and an active GTP-bound form that is able to recruit to membranes different sets of downstream effectors directly responsible for vesicle formation, movement, tethering and fusion (By similarity). The physiological function of RAB42 remains undefined (Probable).</text>
</comment>
<comment type="catalytic activity">
    <reaction evidence="1">
        <text>GTP + H2O = GDP + phosphate + H(+)</text>
        <dbReference type="Rhea" id="RHEA:19669"/>
        <dbReference type="ChEBI" id="CHEBI:15377"/>
        <dbReference type="ChEBI" id="CHEBI:15378"/>
        <dbReference type="ChEBI" id="CHEBI:37565"/>
        <dbReference type="ChEBI" id="CHEBI:43474"/>
        <dbReference type="ChEBI" id="CHEBI:58189"/>
        <dbReference type="EC" id="3.6.5.2"/>
    </reaction>
    <physiologicalReaction direction="left-to-right" evidence="1">
        <dbReference type="Rhea" id="RHEA:19670"/>
    </physiologicalReaction>
</comment>
<comment type="cofactor">
    <cofactor evidence="1">
        <name>Mg(2+)</name>
        <dbReference type="ChEBI" id="CHEBI:18420"/>
    </cofactor>
</comment>
<comment type="activity regulation">
    <text evidence="1">Regulated by guanine nucleotide exchange factors (GEFs) which promote the exchange of bound GDP for free GTP. Regulated by GTPase activating proteins (GAPs) which increase the GTP hydrolysis activity. Inhibited by GDP dissociation inhibitors (GDIs).</text>
</comment>
<comment type="interaction">
    <interactant intactId="EBI-17857145">
        <id>Q8N4Z0-1</id>
    </interactant>
    <interactant intactId="EBI-741158">
        <id>Q96HA8</id>
        <label>NTAQ1</label>
    </interactant>
    <organismsDiffer>false</organismsDiffer>
    <experiments>3</experiments>
</comment>
<comment type="subcellular location">
    <subcellularLocation>
        <location evidence="1">Membrane</location>
        <topology evidence="1">Lipid-anchor</topology>
    </subcellularLocation>
</comment>
<comment type="alternative products">
    <event type="alternative splicing"/>
    <isoform>
        <id>Q8N4Z0-2</id>
        <name>1</name>
        <sequence type="displayed"/>
    </isoform>
    <isoform>
        <id>Q8N4Z0-1</id>
        <name>2</name>
        <sequence type="described" ref="VSP_059258"/>
    </isoform>
</comment>
<comment type="domain">
    <text evidence="1">Switch I, switch II and the interswitch regions are characteristic of Rab GTPases and mediate the interactions with Rab downstream effectors. The switch regions undergo conformational changes upon nucleotide binding which drive interaction with specific sets of effector proteins, with most effectors only binding to GTP-bound Rab.</text>
</comment>
<comment type="similarity">
    <text evidence="2">Belongs to the small GTPase superfamily. Rab family.</text>
</comment>
<proteinExistence type="evidence at protein level"/>
<sequence>MEAEGCRYQFRVALLGDAAVGKTSLLRSYVAGAPGAPEPEPEPEPTVGAECYRRALQLRAGPRVKLQLWDTAGHERFRCITRSFYRNVVGVLLVFDVTNRKSFEHIQDWHQEVMATQGPDKVIFLLVGHKSDLQSTRCVSAQEAEELAASLGMAFVETSVKNNCNVDLAFDTLADAIQQALQQGDIKLEEGWGGVRLIHKTQIPRSPSRKQHSGPCQC</sequence>
<reference key="1">
    <citation type="journal article" date="2004" name="Nat. Genet.">
        <title>Complete sequencing and characterization of 21,243 full-length human cDNAs.</title>
        <authorList>
            <person name="Ota T."/>
            <person name="Suzuki Y."/>
            <person name="Nishikawa T."/>
            <person name="Otsuki T."/>
            <person name="Sugiyama T."/>
            <person name="Irie R."/>
            <person name="Wakamatsu A."/>
            <person name="Hayashi K."/>
            <person name="Sato H."/>
            <person name="Nagai K."/>
            <person name="Kimura K."/>
            <person name="Makita H."/>
            <person name="Sekine M."/>
            <person name="Obayashi M."/>
            <person name="Nishi T."/>
            <person name="Shibahara T."/>
            <person name="Tanaka T."/>
            <person name="Ishii S."/>
            <person name="Yamamoto J."/>
            <person name="Saito K."/>
            <person name="Kawai Y."/>
            <person name="Isono Y."/>
            <person name="Nakamura Y."/>
            <person name="Nagahari K."/>
            <person name="Murakami K."/>
            <person name="Yasuda T."/>
            <person name="Iwayanagi T."/>
            <person name="Wagatsuma M."/>
            <person name="Shiratori A."/>
            <person name="Sudo H."/>
            <person name="Hosoiri T."/>
            <person name="Kaku Y."/>
            <person name="Kodaira H."/>
            <person name="Kondo H."/>
            <person name="Sugawara M."/>
            <person name="Takahashi M."/>
            <person name="Kanda K."/>
            <person name="Yokoi T."/>
            <person name="Furuya T."/>
            <person name="Kikkawa E."/>
            <person name="Omura Y."/>
            <person name="Abe K."/>
            <person name="Kamihara K."/>
            <person name="Katsuta N."/>
            <person name="Sato K."/>
            <person name="Tanikawa M."/>
            <person name="Yamazaki M."/>
            <person name="Ninomiya K."/>
            <person name="Ishibashi T."/>
            <person name="Yamashita H."/>
            <person name="Murakawa K."/>
            <person name="Fujimori K."/>
            <person name="Tanai H."/>
            <person name="Kimata M."/>
            <person name="Watanabe M."/>
            <person name="Hiraoka S."/>
            <person name="Chiba Y."/>
            <person name="Ishida S."/>
            <person name="Ono Y."/>
            <person name="Takiguchi S."/>
            <person name="Watanabe S."/>
            <person name="Yosida M."/>
            <person name="Hotuta T."/>
            <person name="Kusano J."/>
            <person name="Kanehori K."/>
            <person name="Takahashi-Fujii A."/>
            <person name="Hara H."/>
            <person name="Tanase T.-O."/>
            <person name="Nomura Y."/>
            <person name="Togiya S."/>
            <person name="Komai F."/>
            <person name="Hara R."/>
            <person name="Takeuchi K."/>
            <person name="Arita M."/>
            <person name="Imose N."/>
            <person name="Musashino K."/>
            <person name="Yuuki H."/>
            <person name="Oshima A."/>
            <person name="Sasaki N."/>
            <person name="Aotsuka S."/>
            <person name="Yoshikawa Y."/>
            <person name="Matsunawa H."/>
            <person name="Ichihara T."/>
            <person name="Shiohata N."/>
            <person name="Sano S."/>
            <person name="Moriya S."/>
            <person name="Momiyama H."/>
            <person name="Satoh N."/>
            <person name="Takami S."/>
            <person name="Terashima Y."/>
            <person name="Suzuki O."/>
            <person name="Nakagawa S."/>
            <person name="Senoh A."/>
            <person name="Mizoguchi H."/>
            <person name="Goto Y."/>
            <person name="Shimizu F."/>
            <person name="Wakebe H."/>
            <person name="Hishigaki H."/>
            <person name="Watanabe T."/>
            <person name="Sugiyama A."/>
            <person name="Takemoto M."/>
            <person name="Kawakami B."/>
            <person name="Yamazaki M."/>
            <person name="Watanabe K."/>
            <person name="Kumagai A."/>
            <person name="Itakura S."/>
            <person name="Fukuzumi Y."/>
            <person name="Fujimori Y."/>
            <person name="Komiyama M."/>
            <person name="Tashiro H."/>
            <person name="Tanigami A."/>
            <person name="Fujiwara T."/>
            <person name="Ono T."/>
            <person name="Yamada K."/>
            <person name="Fujii Y."/>
            <person name="Ozaki K."/>
            <person name="Hirao M."/>
            <person name="Ohmori Y."/>
            <person name="Kawabata A."/>
            <person name="Hikiji T."/>
            <person name="Kobatake N."/>
            <person name="Inagaki H."/>
            <person name="Ikema Y."/>
            <person name="Okamoto S."/>
            <person name="Okitani R."/>
            <person name="Kawakami T."/>
            <person name="Noguchi S."/>
            <person name="Itoh T."/>
            <person name="Shigeta K."/>
            <person name="Senba T."/>
            <person name="Matsumura K."/>
            <person name="Nakajima Y."/>
            <person name="Mizuno T."/>
            <person name="Morinaga M."/>
            <person name="Sasaki M."/>
            <person name="Togashi T."/>
            <person name="Oyama M."/>
            <person name="Hata H."/>
            <person name="Watanabe M."/>
            <person name="Komatsu T."/>
            <person name="Mizushima-Sugano J."/>
            <person name="Satoh T."/>
            <person name="Shirai Y."/>
            <person name="Takahashi Y."/>
            <person name="Nakagawa K."/>
            <person name="Okumura K."/>
            <person name="Nagase T."/>
            <person name="Nomura N."/>
            <person name="Kikuchi H."/>
            <person name="Masuho Y."/>
            <person name="Yamashita R."/>
            <person name="Nakai K."/>
            <person name="Yada T."/>
            <person name="Nakamura Y."/>
            <person name="Ohara O."/>
            <person name="Isogai T."/>
            <person name="Sugano S."/>
        </authorList>
    </citation>
    <scope>NUCLEOTIDE SEQUENCE [LARGE SCALE MRNA] (ISOFORM 2)</scope>
    <source>
        <tissue>Brain</tissue>
    </source>
</reference>
<reference key="2">
    <citation type="journal article" date="2006" name="Nature">
        <title>The DNA sequence and biological annotation of human chromosome 1.</title>
        <authorList>
            <person name="Gregory S.G."/>
            <person name="Barlow K.F."/>
            <person name="McLay K.E."/>
            <person name="Kaul R."/>
            <person name="Swarbreck D."/>
            <person name="Dunham A."/>
            <person name="Scott C.E."/>
            <person name="Howe K.L."/>
            <person name="Woodfine K."/>
            <person name="Spencer C.C.A."/>
            <person name="Jones M.C."/>
            <person name="Gillson C."/>
            <person name="Searle S."/>
            <person name="Zhou Y."/>
            <person name="Kokocinski F."/>
            <person name="McDonald L."/>
            <person name="Evans R."/>
            <person name="Phillips K."/>
            <person name="Atkinson A."/>
            <person name="Cooper R."/>
            <person name="Jones C."/>
            <person name="Hall R.E."/>
            <person name="Andrews T.D."/>
            <person name="Lloyd C."/>
            <person name="Ainscough R."/>
            <person name="Almeida J.P."/>
            <person name="Ambrose K.D."/>
            <person name="Anderson F."/>
            <person name="Andrew R.W."/>
            <person name="Ashwell R.I.S."/>
            <person name="Aubin K."/>
            <person name="Babbage A.K."/>
            <person name="Bagguley C.L."/>
            <person name="Bailey J."/>
            <person name="Beasley H."/>
            <person name="Bethel G."/>
            <person name="Bird C.P."/>
            <person name="Bray-Allen S."/>
            <person name="Brown J.Y."/>
            <person name="Brown A.J."/>
            <person name="Buckley D."/>
            <person name="Burton J."/>
            <person name="Bye J."/>
            <person name="Carder C."/>
            <person name="Chapman J.C."/>
            <person name="Clark S.Y."/>
            <person name="Clarke G."/>
            <person name="Clee C."/>
            <person name="Cobley V."/>
            <person name="Collier R.E."/>
            <person name="Corby N."/>
            <person name="Coville G.J."/>
            <person name="Davies J."/>
            <person name="Deadman R."/>
            <person name="Dunn M."/>
            <person name="Earthrowl M."/>
            <person name="Ellington A.G."/>
            <person name="Errington H."/>
            <person name="Frankish A."/>
            <person name="Frankland J."/>
            <person name="French L."/>
            <person name="Garner P."/>
            <person name="Garnett J."/>
            <person name="Gay L."/>
            <person name="Ghori M.R.J."/>
            <person name="Gibson R."/>
            <person name="Gilby L.M."/>
            <person name="Gillett W."/>
            <person name="Glithero R.J."/>
            <person name="Grafham D.V."/>
            <person name="Griffiths C."/>
            <person name="Griffiths-Jones S."/>
            <person name="Grocock R."/>
            <person name="Hammond S."/>
            <person name="Harrison E.S.I."/>
            <person name="Hart E."/>
            <person name="Haugen E."/>
            <person name="Heath P.D."/>
            <person name="Holmes S."/>
            <person name="Holt K."/>
            <person name="Howden P.J."/>
            <person name="Hunt A.R."/>
            <person name="Hunt S.E."/>
            <person name="Hunter G."/>
            <person name="Isherwood J."/>
            <person name="James R."/>
            <person name="Johnson C."/>
            <person name="Johnson D."/>
            <person name="Joy A."/>
            <person name="Kay M."/>
            <person name="Kershaw J.K."/>
            <person name="Kibukawa M."/>
            <person name="Kimberley A.M."/>
            <person name="King A."/>
            <person name="Knights A.J."/>
            <person name="Lad H."/>
            <person name="Laird G."/>
            <person name="Lawlor S."/>
            <person name="Leongamornlert D.A."/>
            <person name="Lloyd D.M."/>
            <person name="Loveland J."/>
            <person name="Lovell J."/>
            <person name="Lush M.J."/>
            <person name="Lyne R."/>
            <person name="Martin S."/>
            <person name="Mashreghi-Mohammadi M."/>
            <person name="Matthews L."/>
            <person name="Matthews N.S.W."/>
            <person name="McLaren S."/>
            <person name="Milne S."/>
            <person name="Mistry S."/>
            <person name="Moore M.J.F."/>
            <person name="Nickerson T."/>
            <person name="O'Dell C.N."/>
            <person name="Oliver K."/>
            <person name="Palmeiri A."/>
            <person name="Palmer S.A."/>
            <person name="Parker A."/>
            <person name="Patel D."/>
            <person name="Pearce A.V."/>
            <person name="Peck A.I."/>
            <person name="Pelan S."/>
            <person name="Phelps K."/>
            <person name="Phillimore B.J."/>
            <person name="Plumb R."/>
            <person name="Rajan J."/>
            <person name="Raymond C."/>
            <person name="Rouse G."/>
            <person name="Saenphimmachak C."/>
            <person name="Sehra H.K."/>
            <person name="Sheridan E."/>
            <person name="Shownkeen R."/>
            <person name="Sims S."/>
            <person name="Skuce C.D."/>
            <person name="Smith M."/>
            <person name="Steward C."/>
            <person name="Subramanian S."/>
            <person name="Sycamore N."/>
            <person name="Tracey A."/>
            <person name="Tromans A."/>
            <person name="Van Helmond Z."/>
            <person name="Wall M."/>
            <person name="Wallis J.M."/>
            <person name="White S."/>
            <person name="Whitehead S.L."/>
            <person name="Wilkinson J.E."/>
            <person name="Willey D.L."/>
            <person name="Williams H."/>
            <person name="Wilming L."/>
            <person name="Wray P.W."/>
            <person name="Wu Z."/>
            <person name="Coulson A."/>
            <person name="Vaudin M."/>
            <person name="Sulston J.E."/>
            <person name="Durbin R.M."/>
            <person name="Hubbard T."/>
            <person name="Wooster R."/>
            <person name="Dunham I."/>
            <person name="Carter N.P."/>
            <person name="McVean G."/>
            <person name="Ross M.T."/>
            <person name="Harrow J."/>
            <person name="Olson M.V."/>
            <person name="Beck S."/>
            <person name="Rogers J."/>
            <person name="Bentley D.R."/>
        </authorList>
    </citation>
    <scope>NUCLEOTIDE SEQUENCE [LARGE SCALE GENOMIC DNA]</scope>
</reference>
<reference key="3">
    <citation type="submission" date="2005-09" db="EMBL/GenBank/DDBJ databases">
        <authorList>
            <person name="Mural R.J."/>
            <person name="Istrail S."/>
            <person name="Sutton G.G."/>
            <person name="Florea L."/>
            <person name="Halpern A.L."/>
            <person name="Mobarry C.M."/>
            <person name="Lippert R."/>
            <person name="Walenz B."/>
            <person name="Shatkay H."/>
            <person name="Dew I."/>
            <person name="Miller J.R."/>
            <person name="Flanigan M.J."/>
            <person name="Edwards N.J."/>
            <person name="Bolanos R."/>
            <person name="Fasulo D."/>
            <person name="Halldorsson B.V."/>
            <person name="Hannenhalli S."/>
            <person name="Turner R."/>
            <person name="Yooseph S."/>
            <person name="Lu F."/>
            <person name="Nusskern D.R."/>
            <person name="Shue B.C."/>
            <person name="Zheng X.H."/>
            <person name="Zhong F."/>
            <person name="Delcher A.L."/>
            <person name="Huson D.H."/>
            <person name="Kravitz S.A."/>
            <person name="Mouchard L."/>
            <person name="Reinert K."/>
            <person name="Remington K.A."/>
            <person name="Clark A.G."/>
            <person name="Waterman M.S."/>
            <person name="Eichler E.E."/>
            <person name="Adams M.D."/>
            <person name="Hunkapiller M.W."/>
            <person name="Myers E.W."/>
            <person name="Venter J.C."/>
        </authorList>
    </citation>
    <scope>NUCLEOTIDE SEQUENCE [LARGE SCALE GENOMIC DNA]</scope>
</reference>
<reference key="4">
    <citation type="journal article" date="2004" name="Genome Res.">
        <title>The status, quality, and expansion of the NIH full-length cDNA project: the Mammalian Gene Collection (MGC).</title>
        <authorList>
            <consortium name="The MGC Project Team"/>
        </authorList>
    </citation>
    <scope>NUCLEOTIDE SEQUENCE [LARGE SCALE MRNA] (ISOFORM 2)</scope>
    <source>
        <tissue>Kidney</tissue>
    </source>
</reference>
<evidence type="ECO:0000250" key="1">
    <source>
        <dbReference type="UniProtKB" id="P62820"/>
    </source>
</evidence>
<evidence type="ECO:0000305" key="2"/>
<evidence type="ECO:0000312" key="3">
    <source>
        <dbReference type="HGNC" id="HGNC:28702"/>
    </source>
</evidence>
<organism>
    <name type="scientific">Homo sapiens</name>
    <name type="common">Human</name>
    <dbReference type="NCBI Taxonomy" id="9606"/>
    <lineage>
        <taxon>Eukaryota</taxon>
        <taxon>Metazoa</taxon>
        <taxon>Chordata</taxon>
        <taxon>Craniata</taxon>
        <taxon>Vertebrata</taxon>
        <taxon>Euteleostomi</taxon>
        <taxon>Mammalia</taxon>
        <taxon>Eutheria</taxon>
        <taxon>Euarchontoglires</taxon>
        <taxon>Primates</taxon>
        <taxon>Haplorrhini</taxon>
        <taxon>Catarrhini</taxon>
        <taxon>Hominidae</taxon>
        <taxon>Homo</taxon>
    </lineage>
</organism>
<gene>
    <name evidence="3" type="primary">RAB42</name>
</gene>
<dbReference type="EC" id="3.6.5.2" evidence="1"/>
<dbReference type="EMBL" id="AK312176">
    <property type="protein sequence ID" value="BAG35109.1"/>
    <property type="molecule type" value="mRNA"/>
</dbReference>
<dbReference type="EMBL" id="AL513497">
    <property type="status" value="NOT_ANNOTATED_CDS"/>
    <property type="molecule type" value="Genomic_DNA"/>
</dbReference>
<dbReference type="EMBL" id="CH471059">
    <property type="protein sequence ID" value="EAX07684.1"/>
    <property type="molecule type" value="Genomic_DNA"/>
</dbReference>
<dbReference type="EMBL" id="BC033175">
    <property type="protein sequence ID" value="AAH33175.1"/>
    <property type="molecule type" value="mRNA"/>
</dbReference>
<dbReference type="CCDS" id="CCDS325.1">
    <molecule id="Q8N4Z0-1"/>
</dbReference>
<dbReference type="CCDS" id="CCDS85943.1">
    <molecule id="Q8N4Z0-2"/>
</dbReference>
<dbReference type="RefSeq" id="NP_001180461.1">
    <molecule id="Q8N4Z0-2"/>
    <property type="nucleotide sequence ID" value="NM_001193532.3"/>
</dbReference>
<dbReference type="RefSeq" id="NP_689517.1">
    <molecule id="Q8N4Z0-1"/>
    <property type="nucleotide sequence ID" value="NM_152304.3"/>
</dbReference>
<dbReference type="RefSeq" id="XP_047299915.1">
    <molecule id="Q8N4Z0-1"/>
    <property type="nucleotide sequence ID" value="XM_047443959.1"/>
</dbReference>
<dbReference type="RefSeq" id="XP_054190120.1">
    <molecule id="Q8N4Z0-1"/>
    <property type="nucleotide sequence ID" value="XM_054334145.1"/>
</dbReference>
<dbReference type="SMR" id="Q8N4Z0"/>
<dbReference type="BioGRID" id="125422">
    <property type="interactions" value="6"/>
</dbReference>
<dbReference type="FunCoup" id="Q8N4Z0">
    <property type="interactions" value="411"/>
</dbReference>
<dbReference type="IntAct" id="Q8N4Z0">
    <property type="interactions" value="1"/>
</dbReference>
<dbReference type="STRING" id="9606.ENSP00000491546"/>
<dbReference type="GlyGen" id="Q8N4Z0">
    <property type="glycosylation" value="1 site"/>
</dbReference>
<dbReference type="iPTMnet" id="Q8N4Z0"/>
<dbReference type="PhosphoSitePlus" id="Q8N4Z0"/>
<dbReference type="BioMuta" id="RAB42"/>
<dbReference type="DMDM" id="74751010"/>
<dbReference type="jPOST" id="Q8N4Z0"/>
<dbReference type="MassIVE" id="Q8N4Z0"/>
<dbReference type="PaxDb" id="9606-ENSP00000362932"/>
<dbReference type="PeptideAtlas" id="Q8N4Z0"/>
<dbReference type="ProteomicsDB" id="71993"/>
<dbReference type="Pumba" id="Q8N4Z0"/>
<dbReference type="Antibodypedia" id="30977">
    <property type="antibodies" value="59 antibodies from 15 providers"/>
</dbReference>
<dbReference type="DNASU" id="115273"/>
<dbReference type="Ensembl" id="ENST00000373826.3">
    <molecule id="Q8N4Z0-1"/>
    <property type="protein sequence ID" value="ENSP00000362932.3"/>
    <property type="gene ID" value="ENSG00000188060.8"/>
</dbReference>
<dbReference type="Ensembl" id="ENST00000465518.3">
    <molecule id="Q8N4Z0-2"/>
    <property type="protein sequence ID" value="ENSP00000491546.1"/>
    <property type="gene ID" value="ENSG00000188060.8"/>
</dbReference>
<dbReference type="GeneID" id="115273"/>
<dbReference type="KEGG" id="hsa:115273"/>
<dbReference type="MANE-Select" id="ENST00000465518.3">
    <property type="protein sequence ID" value="ENSP00000491546.1"/>
    <property type="RefSeq nucleotide sequence ID" value="NM_001193532.3"/>
    <property type="RefSeq protein sequence ID" value="NP_001180461.1"/>
</dbReference>
<dbReference type="UCSC" id="uc001bqu.4">
    <molecule id="Q8N4Z0-2"/>
    <property type="organism name" value="human"/>
</dbReference>
<dbReference type="AGR" id="HGNC:28702"/>
<dbReference type="CTD" id="115273"/>
<dbReference type="DisGeNET" id="115273"/>
<dbReference type="GeneCards" id="RAB42"/>
<dbReference type="HGNC" id="HGNC:28702">
    <property type="gene designation" value="RAB42"/>
</dbReference>
<dbReference type="HPA" id="ENSG00000188060">
    <property type="expression patterns" value="Tissue enriched (lymphoid)"/>
</dbReference>
<dbReference type="neXtProt" id="NX_Q8N4Z0"/>
<dbReference type="OpenTargets" id="ENSG00000188060"/>
<dbReference type="PharmGKB" id="PA134976516"/>
<dbReference type="VEuPathDB" id="HostDB:ENSG00000188060"/>
<dbReference type="eggNOG" id="KOG0091">
    <property type="taxonomic scope" value="Eukaryota"/>
</dbReference>
<dbReference type="GeneTree" id="ENSGT00940000162094"/>
<dbReference type="HOGENOM" id="CLU_041217_23_3_1"/>
<dbReference type="InParanoid" id="Q8N4Z0"/>
<dbReference type="OMA" id="FDMTNRR"/>
<dbReference type="OrthoDB" id="9989112at2759"/>
<dbReference type="PAN-GO" id="Q8N4Z0">
    <property type="GO annotations" value="5 GO annotations based on evolutionary models"/>
</dbReference>
<dbReference type="PhylomeDB" id="Q8N4Z0"/>
<dbReference type="PathwayCommons" id="Q8N4Z0"/>
<dbReference type="Reactome" id="R-HSA-8873719">
    <property type="pathway name" value="RAB geranylgeranylation"/>
</dbReference>
<dbReference type="SignaLink" id="Q8N4Z0"/>
<dbReference type="BioGRID-ORCS" id="115273">
    <property type="hits" value="9 hits in 1115 CRISPR screens"/>
</dbReference>
<dbReference type="ChiTaRS" id="RAB42">
    <property type="organism name" value="human"/>
</dbReference>
<dbReference type="GenomeRNAi" id="115273"/>
<dbReference type="Pharos" id="Q8N4Z0">
    <property type="development level" value="Tdark"/>
</dbReference>
<dbReference type="PRO" id="PR:Q8N4Z0"/>
<dbReference type="Proteomes" id="UP000005640">
    <property type="component" value="Chromosome 1"/>
</dbReference>
<dbReference type="RNAct" id="Q8N4Z0">
    <property type="molecule type" value="protein"/>
</dbReference>
<dbReference type="Bgee" id="ENSG00000188060">
    <property type="expression patterns" value="Expressed in male germ line stem cell (sensu Vertebrata) in testis and 98 other cell types or tissues"/>
</dbReference>
<dbReference type="GO" id="GO:0005886">
    <property type="term" value="C:plasma membrane"/>
    <property type="evidence" value="ECO:0000318"/>
    <property type="project" value="GO_Central"/>
</dbReference>
<dbReference type="GO" id="GO:0019003">
    <property type="term" value="F:GDP binding"/>
    <property type="evidence" value="ECO:0000318"/>
    <property type="project" value="GO_Central"/>
</dbReference>
<dbReference type="GO" id="GO:0005525">
    <property type="term" value="F:GTP binding"/>
    <property type="evidence" value="ECO:0000318"/>
    <property type="project" value="GO_Central"/>
</dbReference>
<dbReference type="GO" id="GO:0003924">
    <property type="term" value="F:GTPase activity"/>
    <property type="evidence" value="ECO:0000318"/>
    <property type="project" value="GO_Central"/>
</dbReference>
<dbReference type="FunFam" id="3.40.50.300:FF:001428">
    <property type="entry name" value="putative Ras-related protein Rab-42"/>
    <property type="match status" value="1"/>
</dbReference>
<dbReference type="Gene3D" id="3.40.50.300">
    <property type="entry name" value="P-loop containing nucleotide triphosphate hydrolases"/>
    <property type="match status" value="1"/>
</dbReference>
<dbReference type="InterPro" id="IPR027417">
    <property type="entry name" value="P-loop_NTPase"/>
</dbReference>
<dbReference type="InterPro" id="IPR050209">
    <property type="entry name" value="Rab_GTPases_membrane_traffic"/>
</dbReference>
<dbReference type="InterPro" id="IPR005225">
    <property type="entry name" value="Small_GTP-bd"/>
</dbReference>
<dbReference type="InterPro" id="IPR001806">
    <property type="entry name" value="Small_GTPase"/>
</dbReference>
<dbReference type="NCBIfam" id="TIGR00231">
    <property type="entry name" value="small_GTP"/>
    <property type="match status" value="1"/>
</dbReference>
<dbReference type="PANTHER" id="PTHR47979">
    <property type="entry name" value="DRAB11-RELATED"/>
    <property type="match status" value="1"/>
</dbReference>
<dbReference type="Pfam" id="PF00071">
    <property type="entry name" value="Ras"/>
    <property type="match status" value="1"/>
</dbReference>
<dbReference type="PRINTS" id="PR00449">
    <property type="entry name" value="RASTRNSFRMNG"/>
</dbReference>
<dbReference type="SMART" id="SM00175">
    <property type="entry name" value="RAB"/>
    <property type="match status" value="1"/>
</dbReference>
<dbReference type="SMART" id="SM00176">
    <property type="entry name" value="RAN"/>
    <property type="match status" value="1"/>
</dbReference>
<dbReference type="SMART" id="SM00173">
    <property type="entry name" value="RAS"/>
    <property type="match status" value="1"/>
</dbReference>
<dbReference type="SMART" id="SM00174">
    <property type="entry name" value="RHO"/>
    <property type="match status" value="1"/>
</dbReference>
<dbReference type="SUPFAM" id="SSF52540">
    <property type="entry name" value="P-loop containing nucleoside triphosphate hydrolases"/>
    <property type="match status" value="1"/>
</dbReference>
<dbReference type="PROSITE" id="PS51419">
    <property type="entry name" value="RAB"/>
    <property type="match status" value="1"/>
</dbReference>
<protein>
    <recommendedName>
        <fullName evidence="2">Ras-related protein Rab-42</fullName>
        <ecNumber evidence="1">3.6.5.2</ecNumber>
    </recommendedName>
</protein>
<accession>Q8N4Z0</accession>
<accession>A0A1W2PQ57</accession>
<accession>B2R5G2</accession>